<keyword id="KW-0131">Cell cycle</keyword>
<keyword id="KW-0963">Cytoplasm</keyword>
<keyword id="KW-0342">GTP-binding</keyword>
<keyword id="KW-0547">Nucleotide-binding</keyword>
<keyword id="KW-0548">Nucleotidyltransferase</keyword>
<keyword id="KW-1185">Reference proteome</keyword>
<keyword id="KW-0808">Transferase</keyword>
<dbReference type="EC" id="2.7.7.13"/>
<dbReference type="EMBL" id="DS231667">
    <property type="protein sequence ID" value="ESU14525.1"/>
    <property type="molecule type" value="Genomic_DNA"/>
</dbReference>
<dbReference type="EMBL" id="HG970333">
    <property type="protein sequence ID" value="CEF77197.1"/>
    <property type="molecule type" value="Genomic_DNA"/>
</dbReference>
<dbReference type="RefSeq" id="XP_011319950.1">
    <property type="nucleotide sequence ID" value="XM_011321648.1"/>
</dbReference>
<dbReference type="SMR" id="Q4I1Y5"/>
<dbReference type="FunCoup" id="Q4I1Y5">
    <property type="interactions" value="1319"/>
</dbReference>
<dbReference type="STRING" id="229533.Q4I1Y5"/>
<dbReference type="GeneID" id="23555760"/>
<dbReference type="KEGG" id="fgr:FGSG_08773"/>
<dbReference type="VEuPathDB" id="FungiDB:FGRAMPH1_01G10789"/>
<dbReference type="eggNOG" id="KOG1322">
    <property type="taxonomic scope" value="Eukaryota"/>
</dbReference>
<dbReference type="HOGENOM" id="CLU_029499_0_0_1"/>
<dbReference type="InParanoid" id="Q4I1Y5"/>
<dbReference type="OrthoDB" id="29228at110618"/>
<dbReference type="UniPathway" id="UPA00126">
    <property type="reaction ID" value="UER00930"/>
</dbReference>
<dbReference type="Proteomes" id="UP000070720">
    <property type="component" value="Chromosome 2"/>
</dbReference>
<dbReference type="GO" id="GO:0005737">
    <property type="term" value="C:cytoplasm"/>
    <property type="evidence" value="ECO:0007669"/>
    <property type="project" value="UniProtKB-SubCell"/>
</dbReference>
<dbReference type="GO" id="GO:0005525">
    <property type="term" value="F:GTP binding"/>
    <property type="evidence" value="ECO:0007669"/>
    <property type="project" value="UniProtKB-KW"/>
</dbReference>
<dbReference type="GO" id="GO:0004475">
    <property type="term" value="F:mannose-1-phosphate guanylyltransferase (GTP) activity"/>
    <property type="evidence" value="ECO:0007669"/>
    <property type="project" value="UniProtKB-EC"/>
</dbReference>
<dbReference type="GO" id="GO:0009298">
    <property type="term" value="P:GDP-mannose biosynthetic process"/>
    <property type="evidence" value="ECO:0007669"/>
    <property type="project" value="UniProtKB-UniPathway"/>
</dbReference>
<dbReference type="CDD" id="cd05824">
    <property type="entry name" value="LbH_M1P_guanylylT_C"/>
    <property type="match status" value="1"/>
</dbReference>
<dbReference type="CDD" id="cd06425">
    <property type="entry name" value="M1P_guanylylT_B_like_N"/>
    <property type="match status" value="1"/>
</dbReference>
<dbReference type="FunFam" id="2.160.10.10:FF:000017">
    <property type="entry name" value="Mannose-1-phosphate guanyltransferase"/>
    <property type="match status" value="1"/>
</dbReference>
<dbReference type="FunFam" id="3.90.550.10:FF:000013">
    <property type="entry name" value="mannose-1-phosphate guanyltransferase beta"/>
    <property type="match status" value="1"/>
</dbReference>
<dbReference type="Gene3D" id="2.160.10.10">
    <property type="entry name" value="Hexapeptide repeat proteins"/>
    <property type="match status" value="1"/>
</dbReference>
<dbReference type="Gene3D" id="3.90.550.10">
    <property type="entry name" value="Spore Coat Polysaccharide Biosynthesis Protein SpsA, Chain A"/>
    <property type="match status" value="1"/>
</dbReference>
<dbReference type="InterPro" id="IPR056729">
    <property type="entry name" value="GMPPB_C"/>
</dbReference>
<dbReference type="InterPro" id="IPR045233">
    <property type="entry name" value="GMPPB_N"/>
</dbReference>
<dbReference type="InterPro" id="IPR018357">
    <property type="entry name" value="Hexapep_transf_CS"/>
</dbReference>
<dbReference type="InterPro" id="IPR050486">
    <property type="entry name" value="Mannose-1P_guanyltransferase"/>
</dbReference>
<dbReference type="InterPro" id="IPR005835">
    <property type="entry name" value="NTP_transferase_dom"/>
</dbReference>
<dbReference type="InterPro" id="IPR029044">
    <property type="entry name" value="Nucleotide-diphossugar_trans"/>
</dbReference>
<dbReference type="PANTHER" id="PTHR22572">
    <property type="entry name" value="SUGAR-1-PHOSPHATE GUANYL TRANSFERASE"/>
    <property type="match status" value="1"/>
</dbReference>
<dbReference type="Pfam" id="PF25087">
    <property type="entry name" value="GMPPB_C"/>
    <property type="match status" value="1"/>
</dbReference>
<dbReference type="Pfam" id="PF00483">
    <property type="entry name" value="NTP_transferase"/>
    <property type="match status" value="1"/>
</dbReference>
<dbReference type="SUPFAM" id="SSF53448">
    <property type="entry name" value="Nucleotide-diphospho-sugar transferases"/>
    <property type="match status" value="1"/>
</dbReference>
<dbReference type="PROSITE" id="PS00101">
    <property type="entry name" value="HEXAPEP_TRANSFERASES"/>
    <property type="match status" value="2"/>
</dbReference>
<organism>
    <name type="scientific">Gibberella zeae (strain ATCC MYA-4620 / CBS 123657 / FGSC 9075 / NRRL 31084 / PH-1)</name>
    <name type="common">Wheat head blight fungus</name>
    <name type="synonym">Fusarium graminearum</name>
    <dbReference type="NCBI Taxonomy" id="229533"/>
    <lineage>
        <taxon>Eukaryota</taxon>
        <taxon>Fungi</taxon>
        <taxon>Dikarya</taxon>
        <taxon>Ascomycota</taxon>
        <taxon>Pezizomycotina</taxon>
        <taxon>Sordariomycetes</taxon>
        <taxon>Hypocreomycetidae</taxon>
        <taxon>Hypocreales</taxon>
        <taxon>Nectriaceae</taxon>
        <taxon>Fusarium</taxon>
    </lineage>
</organism>
<feature type="chain" id="PRO_0000238489" description="Mannose-1-phosphate guanyltransferase">
    <location>
        <begin position="1"/>
        <end position="364"/>
    </location>
</feature>
<accession>Q4I1Y5</accession>
<accession>A0A0E0S122</accession>
<accession>V6RRG0</accession>
<comment type="function">
    <text evidence="1">Involved in cell wall synthesis where it is required for glycosylation. Involved in cell cycle progression through cell-size checkpoint (By similarity).</text>
</comment>
<comment type="catalytic activity">
    <reaction>
        <text>alpha-D-mannose 1-phosphate + GTP + H(+) = GDP-alpha-D-mannose + diphosphate</text>
        <dbReference type="Rhea" id="RHEA:15229"/>
        <dbReference type="ChEBI" id="CHEBI:15378"/>
        <dbReference type="ChEBI" id="CHEBI:33019"/>
        <dbReference type="ChEBI" id="CHEBI:37565"/>
        <dbReference type="ChEBI" id="CHEBI:57527"/>
        <dbReference type="ChEBI" id="CHEBI:58409"/>
        <dbReference type="EC" id="2.7.7.13"/>
    </reaction>
</comment>
<comment type="pathway">
    <text>Nucleotide-sugar biosynthesis; GDP-alpha-D-mannose biosynthesis; GDP-alpha-D-mannose from alpha-D-mannose 1-phosphate (GTP route): step 1/1.</text>
</comment>
<comment type="subcellular location">
    <subcellularLocation>
        <location evidence="1">Cytoplasm</location>
    </subcellularLocation>
</comment>
<comment type="similarity">
    <text evidence="2">Belongs to the transferase hexapeptide repeat family.</text>
</comment>
<gene>
    <name type="primary">MPG1</name>
    <name type="ORF">FGRRES_08773_M</name>
    <name type="ORF">FGSG_08773</name>
</gene>
<reference key="1">
    <citation type="journal article" date="2007" name="Science">
        <title>The Fusarium graminearum genome reveals a link between localized polymorphism and pathogen specialization.</title>
        <authorList>
            <person name="Cuomo C.A."/>
            <person name="Gueldener U."/>
            <person name="Xu J.-R."/>
            <person name="Trail F."/>
            <person name="Turgeon B.G."/>
            <person name="Di Pietro A."/>
            <person name="Walton J.D."/>
            <person name="Ma L.-J."/>
            <person name="Baker S.E."/>
            <person name="Rep M."/>
            <person name="Adam G."/>
            <person name="Antoniw J."/>
            <person name="Baldwin T."/>
            <person name="Calvo S.E."/>
            <person name="Chang Y.-L."/>
            <person name="DeCaprio D."/>
            <person name="Gale L.R."/>
            <person name="Gnerre S."/>
            <person name="Goswami R.S."/>
            <person name="Hammond-Kosack K."/>
            <person name="Harris L.J."/>
            <person name="Hilburn K."/>
            <person name="Kennell J.C."/>
            <person name="Kroken S."/>
            <person name="Magnuson J.K."/>
            <person name="Mannhaupt G."/>
            <person name="Mauceli E.W."/>
            <person name="Mewes H.-W."/>
            <person name="Mitterbauer R."/>
            <person name="Muehlbauer G."/>
            <person name="Muensterkoetter M."/>
            <person name="Nelson D."/>
            <person name="O'Donnell K."/>
            <person name="Ouellet T."/>
            <person name="Qi W."/>
            <person name="Quesneville H."/>
            <person name="Roncero M.I.G."/>
            <person name="Seong K.-Y."/>
            <person name="Tetko I.V."/>
            <person name="Urban M."/>
            <person name="Waalwijk C."/>
            <person name="Ward T.J."/>
            <person name="Yao J."/>
            <person name="Birren B.W."/>
            <person name="Kistler H.C."/>
        </authorList>
    </citation>
    <scope>NUCLEOTIDE SEQUENCE [LARGE SCALE GENOMIC DNA]</scope>
    <source>
        <strain>ATCC MYA-4620 / CBS 123657 / FGSC 9075 / NRRL 31084 / PH-1</strain>
    </source>
</reference>
<reference key="2">
    <citation type="journal article" date="2010" name="Nature">
        <title>Comparative genomics reveals mobile pathogenicity chromosomes in Fusarium.</title>
        <authorList>
            <person name="Ma L.-J."/>
            <person name="van der Does H.C."/>
            <person name="Borkovich K.A."/>
            <person name="Coleman J.J."/>
            <person name="Daboussi M.-J."/>
            <person name="Di Pietro A."/>
            <person name="Dufresne M."/>
            <person name="Freitag M."/>
            <person name="Grabherr M."/>
            <person name="Henrissat B."/>
            <person name="Houterman P.M."/>
            <person name="Kang S."/>
            <person name="Shim W.-B."/>
            <person name="Woloshuk C."/>
            <person name="Xie X."/>
            <person name="Xu J.-R."/>
            <person name="Antoniw J."/>
            <person name="Baker S.E."/>
            <person name="Bluhm B.H."/>
            <person name="Breakspear A."/>
            <person name="Brown D.W."/>
            <person name="Butchko R.A.E."/>
            <person name="Chapman S."/>
            <person name="Coulson R."/>
            <person name="Coutinho P.M."/>
            <person name="Danchin E.G.J."/>
            <person name="Diener A."/>
            <person name="Gale L.R."/>
            <person name="Gardiner D.M."/>
            <person name="Goff S."/>
            <person name="Hammond-Kosack K.E."/>
            <person name="Hilburn K."/>
            <person name="Hua-Van A."/>
            <person name="Jonkers W."/>
            <person name="Kazan K."/>
            <person name="Kodira C.D."/>
            <person name="Koehrsen M."/>
            <person name="Kumar L."/>
            <person name="Lee Y.-H."/>
            <person name="Li L."/>
            <person name="Manners J.M."/>
            <person name="Miranda-Saavedra D."/>
            <person name="Mukherjee M."/>
            <person name="Park G."/>
            <person name="Park J."/>
            <person name="Park S.-Y."/>
            <person name="Proctor R.H."/>
            <person name="Regev A."/>
            <person name="Ruiz-Roldan M.C."/>
            <person name="Sain D."/>
            <person name="Sakthikumar S."/>
            <person name="Sykes S."/>
            <person name="Schwartz D.C."/>
            <person name="Turgeon B.G."/>
            <person name="Wapinski I."/>
            <person name="Yoder O."/>
            <person name="Young S."/>
            <person name="Zeng Q."/>
            <person name="Zhou S."/>
            <person name="Galagan J."/>
            <person name="Cuomo C.A."/>
            <person name="Kistler H.C."/>
            <person name="Rep M."/>
        </authorList>
    </citation>
    <scope>GENOME REANNOTATION</scope>
    <source>
        <strain>ATCC MYA-4620 / CBS 123657 / FGSC 9075 / NRRL 31084 / PH-1</strain>
    </source>
</reference>
<reference key="3">
    <citation type="journal article" date="2015" name="BMC Genomics">
        <title>The completed genome sequence of the pathogenic ascomycete fungus Fusarium graminearum.</title>
        <authorList>
            <person name="King R."/>
            <person name="Urban M."/>
            <person name="Hammond-Kosack M.C.U."/>
            <person name="Hassani-Pak K."/>
            <person name="Hammond-Kosack K.E."/>
        </authorList>
    </citation>
    <scope>NUCLEOTIDE SEQUENCE [LARGE SCALE GENOMIC DNA]</scope>
    <source>
        <strain>ATCC MYA-4620 / CBS 123657 / FGSC 9075 / NRRL 31084 / PH-1</strain>
    </source>
</reference>
<sequence length="364" mass="40059">MKGLILVGGYGTRLRPLTLSVPKPLVEFANKPMIVHQIEALVAAGVTDIVLAVNYRPEVMEKFLAEYEEKFGINIEFSVETEPLDTAGPLKLAERILAKDDSPFFVLNSDVICDFPFEDLLAFHKSHGNEGTIVVTKVEEPSKYGVVVHQPGHRSLIDRFVEKPVEFVGNRINAGLYIFNTSILDRIELRPTSIEKETFPAMVKDNQLHSFDLEGFWMDVGQPKDFLSGTCLYLSSLTKKGSKELTSPSEPFVHGGNVLIDPSAKIGKNCRIGPNVTIGPNVVIGDGVRLQRCVLLKGSKVKDHAWVKSTIVGWNSTIGRWARLENVTVLGDDVTVGDEIYVNGGSVLPHKSIKANVDIPAIIM</sequence>
<proteinExistence type="inferred from homology"/>
<protein>
    <recommendedName>
        <fullName>Mannose-1-phosphate guanyltransferase</fullName>
        <ecNumber>2.7.7.13</ecNumber>
    </recommendedName>
    <alternativeName>
        <fullName>GDP-mannose pyrophosphorylase</fullName>
    </alternativeName>
    <alternativeName>
        <fullName>GTP-mannose-1-phosphate guanylyltransferase</fullName>
    </alternativeName>
</protein>
<evidence type="ECO:0000250" key="1"/>
<evidence type="ECO:0000305" key="2"/>
<name>MPG1_GIBZE</name>